<keyword id="KW-0496">Mitochondrion</keyword>
<keyword id="KW-1185">Reference proteome</keyword>
<organism>
    <name type="scientific">Schizosaccharomyces pombe (strain 972 / ATCC 24843)</name>
    <name type="common">Fission yeast</name>
    <dbReference type="NCBI Taxonomy" id="284812"/>
    <lineage>
        <taxon>Eukaryota</taxon>
        <taxon>Fungi</taxon>
        <taxon>Dikarya</taxon>
        <taxon>Ascomycota</taxon>
        <taxon>Taphrinomycotina</taxon>
        <taxon>Schizosaccharomycetes</taxon>
        <taxon>Schizosaccharomycetales</taxon>
        <taxon>Schizosaccharomycetaceae</taxon>
        <taxon>Schizosaccharomyces</taxon>
    </lineage>
</organism>
<name>YI95_SCHPO</name>
<feature type="chain" id="PRO_0000339167" description="UPF0593 mitochondrial protein C806.05">
    <location>
        <begin position="1"/>
        <end position="125"/>
    </location>
</feature>
<reference key="1">
    <citation type="journal article" date="2002" name="Nature">
        <title>The genome sequence of Schizosaccharomyces pombe.</title>
        <authorList>
            <person name="Wood V."/>
            <person name="Gwilliam R."/>
            <person name="Rajandream M.A."/>
            <person name="Lyne M.H."/>
            <person name="Lyne R."/>
            <person name="Stewart A."/>
            <person name="Sgouros J.G."/>
            <person name="Peat N."/>
            <person name="Hayles J."/>
            <person name="Baker S.G."/>
            <person name="Basham D."/>
            <person name="Bowman S."/>
            <person name="Brooks K."/>
            <person name="Brown D."/>
            <person name="Brown S."/>
            <person name="Chillingworth T."/>
            <person name="Churcher C.M."/>
            <person name="Collins M."/>
            <person name="Connor R."/>
            <person name="Cronin A."/>
            <person name="Davis P."/>
            <person name="Feltwell T."/>
            <person name="Fraser A."/>
            <person name="Gentles S."/>
            <person name="Goble A."/>
            <person name="Hamlin N."/>
            <person name="Harris D.E."/>
            <person name="Hidalgo J."/>
            <person name="Hodgson G."/>
            <person name="Holroyd S."/>
            <person name="Hornsby T."/>
            <person name="Howarth S."/>
            <person name="Huckle E.J."/>
            <person name="Hunt S."/>
            <person name="Jagels K."/>
            <person name="James K.D."/>
            <person name="Jones L."/>
            <person name="Jones M."/>
            <person name="Leather S."/>
            <person name="McDonald S."/>
            <person name="McLean J."/>
            <person name="Mooney P."/>
            <person name="Moule S."/>
            <person name="Mungall K.L."/>
            <person name="Murphy L.D."/>
            <person name="Niblett D."/>
            <person name="Odell C."/>
            <person name="Oliver K."/>
            <person name="O'Neil S."/>
            <person name="Pearson D."/>
            <person name="Quail M.A."/>
            <person name="Rabbinowitsch E."/>
            <person name="Rutherford K.M."/>
            <person name="Rutter S."/>
            <person name="Saunders D."/>
            <person name="Seeger K."/>
            <person name="Sharp S."/>
            <person name="Skelton J."/>
            <person name="Simmonds M.N."/>
            <person name="Squares R."/>
            <person name="Squares S."/>
            <person name="Stevens K."/>
            <person name="Taylor K."/>
            <person name="Taylor R.G."/>
            <person name="Tivey A."/>
            <person name="Walsh S.V."/>
            <person name="Warren T."/>
            <person name="Whitehead S."/>
            <person name="Woodward J.R."/>
            <person name="Volckaert G."/>
            <person name="Aert R."/>
            <person name="Robben J."/>
            <person name="Grymonprez B."/>
            <person name="Weltjens I."/>
            <person name="Vanstreels E."/>
            <person name="Rieger M."/>
            <person name="Schaefer M."/>
            <person name="Mueller-Auer S."/>
            <person name="Gabel C."/>
            <person name="Fuchs M."/>
            <person name="Duesterhoeft A."/>
            <person name="Fritzc C."/>
            <person name="Holzer E."/>
            <person name="Moestl D."/>
            <person name="Hilbert H."/>
            <person name="Borzym K."/>
            <person name="Langer I."/>
            <person name="Beck A."/>
            <person name="Lehrach H."/>
            <person name="Reinhardt R."/>
            <person name="Pohl T.M."/>
            <person name="Eger P."/>
            <person name="Zimmermann W."/>
            <person name="Wedler H."/>
            <person name="Wambutt R."/>
            <person name="Purnelle B."/>
            <person name="Goffeau A."/>
            <person name="Cadieu E."/>
            <person name="Dreano S."/>
            <person name="Gloux S."/>
            <person name="Lelaure V."/>
            <person name="Mottier S."/>
            <person name="Galibert F."/>
            <person name="Aves S.J."/>
            <person name="Xiang Z."/>
            <person name="Hunt C."/>
            <person name="Moore K."/>
            <person name="Hurst S.M."/>
            <person name="Lucas M."/>
            <person name="Rochet M."/>
            <person name="Gaillardin C."/>
            <person name="Tallada V.A."/>
            <person name="Garzon A."/>
            <person name="Thode G."/>
            <person name="Daga R.R."/>
            <person name="Cruzado L."/>
            <person name="Jimenez J."/>
            <person name="Sanchez M."/>
            <person name="del Rey F."/>
            <person name="Benito J."/>
            <person name="Dominguez A."/>
            <person name="Revuelta J.L."/>
            <person name="Moreno S."/>
            <person name="Armstrong J."/>
            <person name="Forsburg S.L."/>
            <person name="Cerutti L."/>
            <person name="Lowe T."/>
            <person name="McCombie W.R."/>
            <person name="Paulsen I."/>
            <person name="Potashkin J."/>
            <person name="Shpakovski G.V."/>
            <person name="Ussery D."/>
            <person name="Barrell B.G."/>
            <person name="Nurse P."/>
        </authorList>
    </citation>
    <scope>NUCLEOTIDE SEQUENCE [LARGE SCALE GENOMIC DNA]</scope>
    <source>
        <strain>972 / ATCC 24843</strain>
    </source>
</reference>
<reference key="2">
    <citation type="journal article" date="2006" name="Nat. Biotechnol.">
        <title>ORFeome cloning and global analysis of protein localization in the fission yeast Schizosaccharomyces pombe.</title>
        <authorList>
            <person name="Matsuyama A."/>
            <person name="Arai R."/>
            <person name="Yashiroda Y."/>
            <person name="Shirai A."/>
            <person name="Kamata A."/>
            <person name="Sekido S."/>
            <person name="Kobayashi Y."/>
            <person name="Hashimoto A."/>
            <person name="Hamamoto M."/>
            <person name="Hiraoka Y."/>
            <person name="Horinouchi S."/>
            <person name="Yoshida M."/>
        </authorList>
    </citation>
    <scope>SUBCELLULAR LOCATION [LARGE SCALE ANALYSIS]</scope>
</reference>
<evidence type="ECO:0000269" key="1">
    <source>
    </source>
</evidence>
<evidence type="ECO:0000305" key="2"/>
<accession>Q9UT54</accession>
<dbReference type="EMBL" id="CU329670">
    <property type="protein sequence ID" value="CAB55284.1"/>
    <property type="molecule type" value="Genomic_DNA"/>
</dbReference>
<dbReference type="PIR" id="T39097">
    <property type="entry name" value="T39097"/>
</dbReference>
<dbReference type="RefSeq" id="NP_592855.1">
    <property type="nucleotide sequence ID" value="NM_001018256.2"/>
</dbReference>
<dbReference type="SMR" id="Q9UT54"/>
<dbReference type="PaxDb" id="4896-SPAC806.05.1"/>
<dbReference type="EnsemblFungi" id="SPAC806.05.1">
    <property type="protein sequence ID" value="SPAC806.05.1:pep"/>
    <property type="gene ID" value="SPAC806.05"/>
</dbReference>
<dbReference type="PomBase" id="SPAC806.05"/>
<dbReference type="VEuPathDB" id="FungiDB:SPAC806.05"/>
<dbReference type="HOGENOM" id="CLU_139293_0_0_1"/>
<dbReference type="InParanoid" id="Q9UT54"/>
<dbReference type="OMA" id="HIQMFRR"/>
<dbReference type="PhylomeDB" id="Q9UT54"/>
<dbReference type="PRO" id="PR:Q9UT54"/>
<dbReference type="Proteomes" id="UP000002485">
    <property type="component" value="Chromosome I"/>
</dbReference>
<dbReference type="GO" id="GO:0005739">
    <property type="term" value="C:mitochondrion"/>
    <property type="evidence" value="ECO:0007005"/>
    <property type="project" value="PomBase"/>
</dbReference>
<dbReference type="GO" id="GO:0140053">
    <property type="term" value="P:mitochondrial gene expression"/>
    <property type="evidence" value="ECO:0000303"/>
    <property type="project" value="PomBase"/>
</dbReference>
<protein>
    <recommendedName>
        <fullName>UPF0593 mitochondrial protein C806.05</fullName>
    </recommendedName>
</protein>
<comment type="subcellular location">
    <subcellularLocation>
        <location evidence="1">Mitochondrion</location>
    </subcellularLocation>
</comment>
<comment type="similarity">
    <text evidence="2">Belongs to the UPF0593 family.</text>
</comment>
<gene>
    <name type="ORF">SPAC806.05</name>
</gene>
<sequence>MKKEHASAFRQLWRAGMAAAISTRFPGHRFVIRDLLRNGFRQNNCSFYSKEKVENTVIFLEMAASRKSVEHLILKNRLHIQMFRRKAGQRLAHYSTAKERPYFLSAYDTYEWCLQRVGTIYNLYL</sequence>
<proteinExistence type="inferred from homology"/>